<organism>
    <name type="scientific">Rhizopus niveus</name>
    <dbReference type="NCBI Taxonomy" id="4844"/>
    <lineage>
        <taxon>Eukaryota</taxon>
        <taxon>Fungi</taxon>
        <taxon>Fungi incertae sedis</taxon>
        <taxon>Mucoromycota</taxon>
        <taxon>Mucoromycotina</taxon>
        <taxon>Mucoromycetes</taxon>
        <taxon>Mucorales</taxon>
        <taxon>Mucorineae</taxon>
        <taxon>Rhizopodaceae</taxon>
        <taxon>Rhizopus</taxon>
    </lineage>
</organism>
<evidence type="ECO:0000250" key="1"/>
<evidence type="ECO:0000255" key="2"/>
<evidence type="ECO:0000255" key="3">
    <source>
        <dbReference type="PROSITE-ProRule" id="PRU01103"/>
    </source>
</evidence>
<evidence type="ECO:0000255" key="4">
    <source>
        <dbReference type="PROSITE-ProRule" id="PRU10094"/>
    </source>
</evidence>
<evidence type="ECO:0000256" key="5">
    <source>
        <dbReference type="SAM" id="MobiDB-lite"/>
    </source>
</evidence>
<evidence type="ECO:0000305" key="6"/>
<dbReference type="EC" id="3.4.23.21"/>
<dbReference type="EMBL" id="X56992">
    <property type="protein sequence ID" value="CAA40309.1"/>
    <property type="molecule type" value="Genomic_DNA"/>
</dbReference>
<dbReference type="SMR" id="Q03700"/>
<dbReference type="MEROPS" id="A01.012"/>
<dbReference type="GO" id="GO:0004190">
    <property type="term" value="F:aspartic-type endopeptidase activity"/>
    <property type="evidence" value="ECO:0007669"/>
    <property type="project" value="UniProtKB-KW"/>
</dbReference>
<dbReference type="GO" id="GO:0006508">
    <property type="term" value="P:proteolysis"/>
    <property type="evidence" value="ECO:0007669"/>
    <property type="project" value="UniProtKB-KW"/>
</dbReference>
<dbReference type="CDD" id="cd06097">
    <property type="entry name" value="Aspergillopepsin_like"/>
    <property type="match status" value="1"/>
</dbReference>
<dbReference type="FunFam" id="2.40.70.10:FF:000115">
    <property type="entry name" value="Lysosomal aspartic protease"/>
    <property type="match status" value="1"/>
</dbReference>
<dbReference type="Gene3D" id="2.40.70.10">
    <property type="entry name" value="Acid Proteases"/>
    <property type="match status" value="2"/>
</dbReference>
<dbReference type="InterPro" id="IPR001461">
    <property type="entry name" value="Aspartic_peptidase_A1"/>
</dbReference>
<dbReference type="InterPro" id="IPR001969">
    <property type="entry name" value="Aspartic_peptidase_AS"/>
</dbReference>
<dbReference type="InterPro" id="IPR034163">
    <property type="entry name" value="Aspergillopepsin-like_cat_dom"/>
</dbReference>
<dbReference type="InterPro" id="IPR033121">
    <property type="entry name" value="PEPTIDASE_A1"/>
</dbReference>
<dbReference type="InterPro" id="IPR021109">
    <property type="entry name" value="Peptidase_aspartic_dom_sf"/>
</dbReference>
<dbReference type="PANTHER" id="PTHR47966:SF1">
    <property type="entry name" value="ASPARTYL PROTEINASE"/>
    <property type="match status" value="1"/>
</dbReference>
<dbReference type="PANTHER" id="PTHR47966">
    <property type="entry name" value="BETA-SITE APP-CLEAVING ENZYME, ISOFORM A-RELATED"/>
    <property type="match status" value="1"/>
</dbReference>
<dbReference type="Pfam" id="PF00026">
    <property type="entry name" value="Asp"/>
    <property type="match status" value="1"/>
</dbReference>
<dbReference type="PRINTS" id="PR00792">
    <property type="entry name" value="PEPSIN"/>
</dbReference>
<dbReference type="SUPFAM" id="SSF50630">
    <property type="entry name" value="Acid proteases"/>
    <property type="match status" value="1"/>
</dbReference>
<dbReference type="PROSITE" id="PS00141">
    <property type="entry name" value="ASP_PROTEASE"/>
    <property type="match status" value="2"/>
</dbReference>
<dbReference type="PROSITE" id="PS51767">
    <property type="entry name" value="PEPTIDASE_A1"/>
    <property type="match status" value="1"/>
</dbReference>
<accession>Q03700</accession>
<proteinExistence type="inferred from homology"/>
<protein>
    <recommendedName>
        <fullName>Rhizopuspepsin-4</fullName>
        <ecNumber>3.4.23.21</ecNumber>
    </recommendedName>
    <alternativeName>
        <fullName>Aspartate protease</fullName>
    </alternativeName>
</protein>
<name>CARP4_RHINI</name>
<comment type="catalytic activity">
    <reaction>
        <text>Hydrolysis of proteins with broad specificity similar to that of pepsin A, preferring hydrophobic residues at P1 and P1'. Clots milk and activates trypsinogen. Does not cleave 4-Gln-|-His-5, but does cleave 10-His-|-Leu-11 and 12-Val-|-Glu-13 in B chain of insulin.</text>
        <dbReference type="EC" id="3.4.23.21"/>
    </reaction>
</comment>
<comment type="similarity">
    <text evidence="6">Belongs to the peptidase A1 family.</text>
</comment>
<feature type="signal peptide" evidence="2">
    <location>
        <begin position="1"/>
        <end position="21"/>
    </location>
</feature>
<feature type="propeptide" id="PRO_0000025889" description="Activation peptide" evidence="2">
    <location>
        <begin position="22"/>
        <end position="74"/>
    </location>
</feature>
<feature type="chain" id="PRO_0000025890" description="Rhizopuspepsin-4">
    <location>
        <begin position="75"/>
        <end position="398"/>
    </location>
</feature>
<feature type="domain" description="Peptidase A1" evidence="3">
    <location>
        <begin position="90"/>
        <end position="394"/>
    </location>
</feature>
<feature type="region of interest" description="Disordered" evidence="5">
    <location>
        <begin position="58"/>
        <end position="83"/>
    </location>
</feature>
<feature type="compositionally biased region" description="Low complexity" evidence="5">
    <location>
        <begin position="58"/>
        <end position="78"/>
    </location>
</feature>
<feature type="active site" evidence="4">
    <location>
        <position position="108"/>
    </location>
</feature>
<feature type="active site" evidence="4">
    <location>
        <position position="291"/>
    </location>
</feature>
<feature type="disulfide bond" evidence="1">
    <location>
        <begin position="121"/>
        <end position="124"/>
    </location>
</feature>
<feature type="disulfide bond" evidence="1">
    <location>
        <begin position="325"/>
        <end position="358"/>
    </location>
</feature>
<sequence length="398" mass="41409">MKFTLISSCVALACMALAVEAAPSGKKINVPLSKNANYKPNAKRAIEKANAKYARFRSSSSSSSSSSCGSAGTESSGSVPVTDDGNDIEYYGEVTVGTPGIKLKLDFDTGSSDLWFASTLCTNCGSSQTKYDPSQSSTYAKDGRTWSISYGDGSSASGILGKDTVNLGGLKIKNQIIELAKREASSFSSGPSDGLLGLGFDSITTVSGVQTPMDNLISQGLISNPVFGVYLGKESNGGGGEYIFGGYDSSKFSGDLTTIAVDNSNGWYGITIDGASISGSQVSDSFSAILDTGTTLLILPSNVASSVAQAYNANDNGDGTYNINCDTSELQPLVFTIGGSTFEVPTDSLIFEQDGNTCVAGFGYGQDDFAIFGDVFLKNNYVVFNPQVPQVQIAPISN</sequence>
<reference key="1">
    <citation type="submission" date="1990-12" db="EMBL/GenBank/DDBJ databases">
        <authorList>
            <person name="Horiuchi H."/>
            <person name="Nakamura H."/>
            <person name="Okazaki T."/>
            <person name="Yano K."/>
            <person name="Takagi M."/>
        </authorList>
    </citation>
    <scope>NUCLEOTIDE SEQUENCE [GENOMIC DNA]</scope>
    <source>
        <strain>NBRC 4810 / AS 3.4817</strain>
    </source>
</reference>
<keyword id="KW-0064">Aspartyl protease</keyword>
<keyword id="KW-1015">Disulfide bond</keyword>
<keyword id="KW-0378">Hydrolase</keyword>
<keyword id="KW-0645">Protease</keyword>
<keyword id="KW-0732">Signal</keyword>
<keyword id="KW-0865">Zymogen</keyword>